<dbReference type="EMBL" id="AADN04000139">
    <property type="status" value="NOT_ANNOTATED_CDS"/>
    <property type="molecule type" value="Genomic_DNA"/>
</dbReference>
<dbReference type="SMR" id="A0A1D5P556"/>
<dbReference type="FunCoup" id="A0A1D5P556">
    <property type="interactions" value="16"/>
</dbReference>
<dbReference type="STRING" id="9031.ENSGALP00000037454"/>
<dbReference type="PaxDb" id="9031-ENSGALP00000037454"/>
<dbReference type="VEuPathDB" id="HostDB:geneid_421422"/>
<dbReference type="eggNOG" id="KOG1922">
    <property type="taxonomic scope" value="Eukaryota"/>
</dbReference>
<dbReference type="InParanoid" id="A0A1D5P556"/>
<dbReference type="OrthoDB" id="1104827at2759"/>
<dbReference type="TreeFam" id="TF314602"/>
<dbReference type="Proteomes" id="UP000000539">
    <property type="component" value="Unassembled WGS sequence"/>
</dbReference>
<dbReference type="GO" id="GO:0003779">
    <property type="term" value="F:actin binding"/>
    <property type="evidence" value="ECO:0007669"/>
    <property type="project" value="UniProtKB-KW"/>
</dbReference>
<dbReference type="GO" id="GO:0031267">
    <property type="term" value="F:small GTPase binding"/>
    <property type="evidence" value="ECO:0007669"/>
    <property type="project" value="InterPro"/>
</dbReference>
<dbReference type="GO" id="GO:0030036">
    <property type="term" value="P:actin cytoskeleton organization"/>
    <property type="evidence" value="ECO:0007669"/>
    <property type="project" value="InterPro"/>
</dbReference>
<dbReference type="GO" id="GO:0021516">
    <property type="term" value="P:dorsal spinal cord development"/>
    <property type="evidence" value="ECO:0000315"/>
    <property type="project" value="UniProtKB"/>
</dbReference>
<dbReference type="GO" id="GO:0048715">
    <property type="term" value="P:negative regulation of oligodendrocyte differentiation"/>
    <property type="evidence" value="ECO:0000250"/>
    <property type="project" value="UniProtKB"/>
</dbReference>
<dbReference type="GO" id="GO:0090263">
    <property type="term" value="P:positive regulation of canonical Wnt signaling pathway"/>
    <property type="evidence" value="ECO:0000314"/>
    <property type="project" value="UniProtKB"/>
</dbReference>
<dbReference type="GO" id="GO:0060828">
    <property type="term" value="P:regulation of canonical Wnt signaling pathway"/>
    <property type="evidence" value="ECO:0000250"/>
    <property type="project" value="UniProtKB"/>
</dbReference>
<dbReference type="GO" id="GO:2000050">
    <property type="term" value="P:regulation of non-canonical Wnt signaling pathway"/>
    <property type="evidence" value="ECO:0000250"/>
    <property type="project" value="UniProtKB"/>
</dbReference>
<dbReference type="GO" id="GO:0016055">
    <property type="term" value="P:Wnt signaling pathway"/>
    <property type="evidence" value="ECO:0007669"/>
    <property type="project" value="UniProtKB-KW"/>
</dbReference>
<dbReference type="FunFam" id="1.10.238.150:FF:000001">
    <property type="entry name" value="Dishevelled associated activator of morphogenesis 1"/>
    <property type="match status" value="1"/>
</dbReference>
<dbReference type="FunFam" id="1.20.58.2220:FF:000002">
    <property type="entry name" value="Dishevelled associated activator of morphogenesis 1"/>
    <property type="match status" value="1"/>
</dbReference>
<dbReference type="FunFam" id="1.25.10.10:FF:000012">
    <property type="entry name" value="Dishevelled associated activator of morphogenesis 2"/>
    <property type="match status" value="1"/>
</dbReference>
<dbReference type="Gene3D" id="1.20.58.2220">
    <property type="entry name" value="Formin, FH2 domain"/>
    <property type="match status" value="1"/>
</dbReference>
<dbReference type="Gene3D" id="1.10.238.150">
    <property type="entry name" value="Formin, FH3 diaphanous domain"/>
    <property type="match status" value="1"/>
</dbReference>
<dbReference type="Gene3D" id="1.25.10.10">
    <property type="entry name" value="Leucine-rich Repeat Variant"/>
    <property type="match status" value="1"/>
</dbReference>
<dbReference type="InterPro" id="IPR011989">
    <property type="entry name" value="ARM-like"/>
</dbReference>
<dbReference type="InterPro" id="IPR016024">
    <property type="entry name" value="ARM-type_fold"/>
</dbReference>
<dbReference type="InterPro" id="IPR014767">
    <property type="entry name" value="DAD_dom"/>
</dbReference>
<dbReference type="InterPro" id="IPR015425">
    <property type="entry name" value="FH2_Formin"/>
</dbReference>
<dbReference type="InterPro" id="IPR042201">
    <property type="entry name" value="FH2_Formin_sf"/>
</dbReference>
<dbReference type="InterPro" id="IPR010472">
    <property type="entry name" value="FH3_dom"/>
</dbReference>
<dbReference type="InterPro" id="IPR051425">
    <property type="entry name" value="Formin_Homology"/>
</dbReference>
<dbReference type="InterPro" id="IPR014768">
    <property type="entry name" value="GBD/FH3_dom"/>
</dbReference>
<dbReference type="InterPro" id="IPR010473">
    <property type="entry name" value="GTPase-bd"/>
</dbReference>
<dbReference type="PANTHER" id="PTHR45725:SF7">
    <property type="entry name" value="DISHEVELED-ASSOCIATED ACTIVATOR OF MORPHOGENESIS 2"/>
    <property type="match status" value="1"/>
</dbReference>
<dbReference type="PANTHER" id="PTHR45725">
    <property type="entry name" value="FORMIN HOMOLOGY 2 FAMILY MEMBER"/>
    <property type="match status" value="1"/>
</dbReference>
<dbReference type="Pfam" id="PF06367">
    <property type="entry name" value="Drf_FH3"/>
    <property type="match status" value="1"/>
</dbReference>
<dbReference type="Pfam" id="PF06371">
    <property type="entry name" value="Drf_GBD"/>
    <property type="match status" value="1"/>
</dbReference>
<dbReference type="Pfam" id="PF02181">
    <property type="entry name" value="FH2"/>
    <property type="match status" value="1"/>
</dbReference>
<dbReference type="SMART" id="SM01139">
    <property type="entry name" value="Drf_FH3"/>
    <property type="match status" value="1"/>
</dbReference>
<dbReference type="SMART" id="SM01140">
    <property type="entry name" value="Drf_GBD"/>
    <property type="match status" value="1"/>
</dbReference>
<dbReference type="SMART" id="SM00498">
    <property type="entry name" value="FH2"/>
    <property type="match status" value="1"/>
</dbReference>
<dbReference type="SUPFAM" id="SSF48371">
    <property type="entry name" value="ARM repeat"/>
    <property type="match status" value="1"/>
</dbReference>
<dbReference type="SUPFAM" id="SSF101447">
    <property type="entry name" value="Formin homology 2 domain (FH2 domain)"/>
    <property type="match status" value="1"/>
</dbReference>
<dbReference type="PROSITE" id="PS51231">
    <property type="entry name" value="DAD"/>
    <property type="match status" value="1"/>
</dbReference>
<dbReference type="PROSITE" id="PS51444">
    <property type="entry name" value="FH2"/>
    <property type="match status" value="1"/>
</dbReference>
<dbReference type="PROSITE" id="PS51232">
    <property type="entry name" value="GBD_FH3"/>
    <property type="match status" value="1"/>
</dbReference>
<reference key="1">
    <citation type="journal article" date="2004" name="Nature">
        <title>Sequence and comparative analysis of the chicken genome provide unique perspectives on vertebrate evolution.</title>
        <authorList>
            <person name="Hillier L.W."/>
            <person name="Miller W."/>
            <person name="Birney E."/>
            <person name="Warren W."/>
            <person name="Hardison R.C."/>
            <person name="Ponting C.P."/>
            <person name="Bork P."/>
            <person name="Burt D.W."/>
            <person name="Groenen M.A.M."/>
            <person name="Delany M.E."/>
            <person name="Dodgson J.B."/>
            <person name="Chinwalla A.T."/>
            <person name="Cliften P.F."/>
            <person name="Clifton S.W."/>
            <person name="Delehaunty K.D."/>
            <person name="Fronick C."/>
            <person name="Fulton R.S."/>
            <person name="Graves T.A."/>
            <person name="Kremitzki C."/>
            <person name="Layman D."/>
            <person name="Magrini V."/>
            <person name="McPherson J.D."/>
            <person name="Miner T.L."/>
            <person name="Minx P."/>
            <person name="Nash W.E."/>
            <person name="Nhan M.N."/>
            <person name="Nelson J.O."/>
            <person name="Oddy L.G."/>
            <person name="Pohl C.S."/>
            <person name="Randall-Maher J."/>
            <person name="Smith S.M."/>
            <person name="Wallis J.W."/>
            <person name="Yang S.-P."/>
            <person name="Romanov M.N."/>
            <person name="Rondelli C.M."/>
            <person name="Paton B."/>
            <person name="Smith J."/>
            <person name="Morrice D."/>
            <person name="Daniels L."/>
            <person name="Tempest H.G."/>
            <person name="Robertson L."/>
            <person name="Masabanda J.S."/>
            <person name="Griffin D.K."/>
            <person name="Vignal A."/>
            <person name="Fillon V."/>
            <person name="Jacobbson L."/>
            <person name="Kerje S."/>
            <person name="Andersson L."/>
            <person name="Crooijmans R.P."/>
            <person name="Aerts J."/>
            <person name="van der Poel J.J."/>
            <person name="Ellegren H."/>
            <person name="Caldwell R.B."/>
            <person name="Hubbard S.J."/>
            <person name="Grafham D.V."/>
            <person name="Kierzek A.M."/>
            <person name="McLaren S.R."/>
            <person name="Overton I.M."/>
            <person name="Arakawa H."/>
            <person name="Beattie K.J."/>
            <person name="Bezzubov Y."/>
            <person name="Boardman P.E."/>
            <person name="Bonfield J.K."/>
            <person name="Croning M.D.R."/>
            <person name="Davies R.M."/>
            <person name="Francis M.D."/>
            <person name="Humphray S.J."/>
            <person name="Scott C.E."/>
            <person name="Taylor R.G."/>
            <person name="Tickle C."/>
            <person name="Brown W.R.A."/>
            <person name="Rogers J."/>
            <person name="Buerstedde J.-M."/>
            <person name="Wilson S.A."/>
            <person name="Stubbs L."/>
            <person name="Ovcharenko I."/>
            <person name="Gordon L."/>
            <person name="Lucas S."/>
            <person name="Miller M.M."/>
            <person name="Inoko H."/>
            <person name="Shiina T."/>
            <person name="Kaufman J."/>
            <person name="Salomonsen J."/>
            <person name="Skjoedt K."/>
            <person name="Wong G.K.-S."/>
            <person name="Wang J."/>
            <person name="Liu B."/>
            <person name="Wang J."/>
            <person name="Yu J."/>
            <person name="Yang H."/>
            <person name="Nefedov M."/>
            <person name="Koriabine M."/>
            <person name="Dejong P.J."/>
            <person name="Goodstadt L."/>
            <person name="Webber C."/>
            <person name="Dickens N.J."/>
            <person name="Letunic I."/>
            <person name="Suyama M."/>
            <person name="Torrents D."/>
            <person name="von Mering C."/>
            <person name="Zdobnov E.M."/>
            <person name="Makova K."/>
            <person name="Nekrutenko A."/>
            <person name="Elnitski L."/>
            <person name="Eswara P."/>
            <person name="King D.C."/>
            <person name="Yang S.-P."/>
            <person name="Tyekucheva S."/>
            <person name="Radakrishnan A."/>
            <person name="Harris R.S."/>
            <person name="Chiaromonte F."/>
            <person name="Taylor J."/>
            <person name="He J."/>
            <person name="Rijnkels M."/>
            <person name="Griffiths-Jones S."/>
            <person name="Ureta-Vidal A."/>
            <person name="Hoffman M.M."/>
            <person name="Severin J."/>
            <person name="Searle S.M.J."/>
            <person name="Law A.S."/>
            <person name="Speed D."/>
            <person name="Waddington D."/>
            <person name="Cheng Z."/>
            <person name="Tuzun E."/>
            <person name="Eichler E."/>
            <person name="Bao Z."/>
            <person name="Flicek P."/>
            <person name="Shteynberg D.D."/>
            <person name="Brent M.R."/>
            <person name="Bye J.M."/>
            <person name="Huckle E.J."/>
            <person name="Chatterji S."/>
            <person name="Dewey C."/>
            <person name="Pachter L."/>
            <person name="Kouranov A."/>
            <person name="Mourelatos Z."/>
            <person name="Hatzigeorgiou A.G."/>
            <person name="Paterson A.H."/>
            <person name="Ivarie R."/>
            <person name="Brandstrom M."/>
            <person name="Axelsson E."/>
            <person name="Backstrom N."/>
            <person name="Berlin S."/>
            <person name="Webster M.T."/>
            <person name="Pourquie O."/>
            <person name="Reymond A."/>
            <person name="Ucla C."/>
            <person name="Antonarakis S.E."/>
            <person name="Long M."/>
            <person name="Emerson J.J."/>
            <person name="Betran E."/>
            <person name="Dupanloup I."/>
            <person name="Kaessmann H."/>
            <person name="Hinrichs A.S."/>
            <person name="Bejerano G."/>
            <person name="Furey T.S."/>
            <person name="Harte R.A."/>
            <person name="Raney B."/>
            <person name="Siepel A."/>
            <person name="Kent W.J."/>
            <person name="Haussler D."/>
            <person name="Eyras E."/>
            <person name="Castelo R."/>
            <person name="Abril J.F."/>
            <person name="Castellano S."/>
            <person name="Camara F."/>
            <person name="Parra G."/>
            <person name="Guigo R."/>
            <person name="Bourque G."/>
            <person name="Tesler G."/>
            <person name="Pevzner P.A."/>
            <person name="Smit A."/>
            <person name="Fulton L.A."/>
            <person name="Mardis E.R."/>
            <person name="Wilson R.K."/>
        </authorList>
    </citation>
    <scope>NUCLEOTIDE SEQUENCE [LARGE SCALE GENOMIC DNA]</scope>
    <source>
        <strain>Red jungle fowl</strain>
    </source>
</reference>
<reference key="2">
    <citation type="journal article" date="2012" name="Dev. Cell">
        <title>Daam2 is required for dorsal patterning via modulation of canonical Wnt signaling in the developing spinal cord.</title>
        <authorList>
            <person name="Lee H.K."/>
            <person name="Deneen B."/>
        </authorList>
    </citation>
    <scope>FUNCTION</scope>
    <scope>TISSUE SPECIFICITY</scope>
</reference>
<reference key="3">
    <citation type="journal article" date="2013" name="Dev. Cell">
        <title>Integration of left-right Pitx2 transcription and Wnt signaling drives asymmetric gut morphogenesis via Daam2.</title>
        <authorList>
            <person name="Welsh I.C."/>
            <person name="Thomsen M."/>
            <person name="Gludish D.W."/>
            <person name="Alfonso-Parra C."/>
            <person name="Bai Y."/>
            <person name="Martin J.F."/>
            <person name="Kurpios N.A."/>
        </authorList>
    </citation>
    <scope>FUNCTION</scope>
</reference>
<reference key="4">
    <citation type="journal article" date="2015" name="Neuron">
        <title>Daam2-PIP5K is a regulatory pathway for Wnt signaling and therapeutic target for remyelination in the CNS.</title>
        <authorList>
            <person name="Lee H.K."/>
            <person name="Chaboub L.S."/>
            <person name="Zhu W."/>
            <person name="Zollinger D."/>
            <person name="Rasband M.N."/>
            <person name="Fancy S.P."/>
            <person name="Deneen B."/>
        </authorList>
    </citation>
    <scope>FUNCTION</scope>
</reference>
<comment type="function">
    <text evidence="2 8 9 10">Key regulator of the Wnt signaling pathway, which is required for various processes during development, such as dorsal patterning, determination of left/right symmetry or myelination in the central nervous system (PubMed:22227309, PubMed:24091014, PubMed:25754822). Acts downstream of Wnt ligands and upstream of beta-catenin (CTNNB1) (PubMed:22227309, PubMed:25754822). Required for canonical Wnt signaling pathway during patterning in the dorsal spinal cord by promoting the aggregation of Disheveled (Dvl) complexes, thereby clustering and formation of Wnt receptor signalosomes and potentiating Wnt activity (PubMed:22227309). During dorsal patterning of the spinal cord, inhibits oligodendrocytes differentiation via interaction with PIP5K1A (PubMed:25754822). Also regulates non-canonical Wnt signaling pathway (PubMed:24091014). Acts downstream of PITX2 in the developing gut and is required for left/right asymmetry within dorsal mesentery: affects mesenchymal condensation by lengthening cadherin-based junctions through WNT5A and non-canonical Wnt signaling, inducing polarized condensation in the left dorsal mesentery necessary to initiate gut rotation (PubMed:24091014). Together with DAAM1, required for myocardial maturation and sarcomere assembly (By similarity).</text>
</comment>
<comment type="tissue specificity">
    <text evidence="8">Expressed in progenitor populations of the embryonic spinal cord (at protein level).</text>
</comment>
<comment type="domain">
    <text evidence="1">The DAD domain regulates activation via by an autoinhibitory interaction with the GBD/FH3 domain. This autoinhibition is released upon competitive binding of an activated GTPase. The release of DAD allows the FH2 domain to then nucleate and elongate nonbranched actin filaments (By similarity).</text>
</comment>
<comment type="similarity">
    <text evidence="12">Belongs to the formin homology family.</text>
</comment>
<feature type="chain" id="PRO_0000443450" description="Disheveled-associated activator of morphogenesis 2">
    <location>
        <begin position="1"/>
        <end position="1075"/>
    </location>
</feature>
<feature type="domain" description="GBD/FH3" evidence="5">
    <location>
        <begin position="40"/>
        <end position="416"/>
    </location>
</feature>
<feature type="domain" description="FH2" evidence="6">
    <location>
        <begin position="605"/>
        <end position="1075"/>
    </location>
</feature>
<feature type="domain" description="DAD" evidence="4">
    <location>
        <begin position="1025"/>
        <end position="1075"/>
    </location>
</feature>
<feature type="region of interest" description="Disordered" evidence="7">
    <location>
        <begin position="517"/>
        <end position="611"/>
    </location>
</feature>
<feature type="region of interest" description="Disordered" evidence="7">
    <location>
        <begin position="1006"/>
        <end position="1025"/>
    </location>
</feature>
<feature type="region of interest" description="Disordered" evidence="7">
    <location>
        <begin position="1048"/>
        <end position="1075"/>
    </location>
</feature>
<feature type="coiled-coil region" evidence="3">
    <location>
        <begin position="437"/>
        <end position="517"/>
    </location>
</feature>
<feature type="compositionally biased region" description="Pro residues" evidence="7">
    <location>
        <begin position="523"/>
        <end position="532"/>
    </location>
</feature>
<feature type="compositionally biased region" description="Low complexity" evidence="7">
    <location>
        <begin position="533"/>
        <end position="544"/>
    </location>
</feature>
<feature type="compositionally biased region" description="Pro residues" evidence="7">
    <location>
        <begin position="550"/>
        <end position="581"/>
    </location>
</feature>
<feature type="compositionally biased region" description="Basic and acidic residues" evidence="7">
    <location>
        <begin position="1064"/>
        <end position="1075"/>
    </location>
</feature>
<protein>
    <recommendedName>
        <fullName evidence="11">Disheveled-associated activator of morphogenesis 2</fullName>
    </recommendedName>
</protein>
<evidence type="ECO:0000250" key="1">
    <source>
        <dbReference type="UniProtKB" id="O08808"/>
    </source>
</evidence>
<evidence type="ECO:0000250" key="2">
    <source>
        <dbReference type="UniProtKB" id="Q80U19"/>
    </source>
</evidence>
<evidence type="ECO:0000255" key="3"/>
<evidence type="ECO:0000255" key="4">
    <source>
        <dbReference type="PROSITE-ProRule" id="PRU00577"/>
    </source>
</evidence>
<evidence type="ECO:0000255" key="5">
    <source>
        <dbReference type="PROSITE-ProRule" id="PRU00579"/>
    </source>
</evidence>
<evidence type="ECO:0000255" key="6">
    <source>
        <dbReference type="PROSITE-ProRule" id="PRU00774"/>
    </source>
</evidence>
<evidence type="ECO:0000256" key="7">
    <source>
        <dbReference type="SAM" id="MobiDB-lite"/>
    </source>
</evidence>
<evidence type="ECO:0000269" key="8">
    <source>
    </source>
</evidence>
<evidence type="ECO:0000269" key="9">
    <source>
    </source>
</evidence>
<evidence type="ECO:0000269" key="10">
    <source>
    </source>
</evidence>
<evidence type="ECO:0000303" key="11">
    <source>
    </source>
</evidence>
<evidence type="ECO:0000305" key="12"/>
<name>DAAM2_CHICK</name>
<proteinExistence type="evidence at protein level"/>
<keyword id="KW-0009">Actin-binding</keyword>
<keyword id="KW-0175">Coiled coil</keyword>
<keyword id="KW-1185">Reference proteome</keyword>
<keyword id="KW-0879">Wnt signaling pathway</keyword>
<organism>
    <name type="scientific">Gallus gallus</name>
    <name type="common">Chicken</name>
    <dbReference type="NCBI Taxonomy" id="9031"/>
    <lineage>
        <taxon>Eukaryota</taxon>
        <taxon>Metazoa</taxon>
        <taxon>Chordata</taxon>
        <taxon>Craniata</taxon>
        <taxon>Vertebrata</taxon>
        <taxon>Euteleostomi</taxon>
        <taxon>Archelosauria</taxon>
        <taxon>Archosauria</taxon>
        <taxon>Dinosauria</taxon>
        <taxon>Saurischia</taxon>
        <taxon>Theropoda</taxon>
        <taxon>Coelurosauria</taxon>
        <taxon>Aves</taxon>
        <taxon>Neognathae</taxon>
        <taxon>Galloanserae</taxon>
        <taxon>Galliformes</taxon>
        <taxon>Phasianidae</taxon>
        <taxon>Phasianinae</taxon>
        <taxon>Gallus</taxon>
    </lineage>
</organism>
<accession>A0A1D5P556</accession>
<accession>A0A1D5P1Y2</accession>
<accession>A0A1D5PPK5</accession>
<accession>E1BS28</accession>
<sequence>MAPRKRNRHALGFLCCFGGSDLPEINLKDNNPLQFLDFTVPIPPTEELNARFSELVDELDLTDKNREAMFALPPEKKWQIYCSKKKEQEDPNKLATSWPDYYIDRINSMAAMQTLYAFDEEETEMKNKIVEDLKTALRTQPMRFVMRFIELDGLSCLLNFLKSMDYETSESRIHTSVIGCIKALMNNSQGRAHVLAHPESINIISQSLRTENIKTKIAVLEILGAVCLVPDGHKKVLQAMLHYQVYAAERTRFQTLLNELDRSMGRYRDEVNLKTAIMSFINAVLNAGAGEDNLEFRLHLRYEFLMLGIQPVIDKLREHENATLDRHLDFFEMVRNEDDLELAKRFDLIHIDTKSASQMFELIKKRLKHTDAYPYLLSILQHCLQMPYKRNGGNFQQWQLLDRILQQIVLQDERGDDPDIAPLENFNVKNIIKMLVNENEVKQWRDQAEKFRKDHAELMSKLEKKERECETKTQEKDEMMKTLNKMKDKLQKESLELRQARDQMNDLVAQLNEYSQGGSISFPAPPPPPPGGPLALSSALSSALTSENLPPLPPPLPFSSCPPPPAPPPPPGGPPPPPGAPPFFSLGVPPPSTTTFSSAGTSLKKKSIPQPSHPLKSFNWAKLSEERIHGTIWNEIDDLKAFKVLDLEDFEKMFSAYQRHQKEMGSTEDLYLSTRKVKELSVIDGRRAQNCVILLSKLKLSNEEIRQAILKMDEQEDLAKDMLEQLLKFVPEKSDTDLLEEHKHEIERMARADRFLFEMSRIDHYQQRLQALFFKKKFPERLAEAKPKVEAILLASKELIRSKRLRQLLEVVLAFGNYMNKGQRGSAYGFKVSSLNKIADTKSSIDRNITLLHYLIMIFEKNYPDILDIQTELQHLPEAAKVNLVELEKEVNNIKTGLKAVEAELDYQKRRIRESGDRFVPVMSDFITVASFSFSELEDLLNDARDKYAKALKHFGENEGKMQPDEFFGIFDTFLQSFAEAKQDLENMRKKKEEEERRARMEAMLKEQREKERRQKKAKAGSISEETGEFDDLVSALRSGEVFDKDLSKLKRNRKRSGNQGLETSRERVVTKLNY</sequence>
<gene>
    <name evidence="11" type="primary">DAAM2</name>
</gene>